<sequence>MAYSIANNQLLRQNFAKIKKIIDIPNLIDIQKNSYKRFLQIDTPPEARKNSGLEAVFKSVFPIKDFSDTASLEYVSYSLGTPKYDVEECHQRGMTFAAPMKVKVRLVVWDVNKDTGVRSIRDIKEQEVYFGEIPLMTENGTFIINGTERVIVSQLHRSPGVFYDHDKGKTHSSGKVLYSARVIPYRGSWLDFEFDHKDILYVRIDRRRKMPATVLLKALGNSAEELLNFYYRSEEIGLDGERMWKKADAELLTTQKTSSDIVDSKTGEVIIKANRKFTKAAIRKMTEHGITEIPIKAEEVCGKYASTDIVDPATGEVLVECNEEISQAKLDEIKARGISEFKVLFIDNLHVTSSLRDTLLVDKINTTDDALIEIYRRLRPGDPPTLKSAQALFDNLFFNAERYDLSAVGRLKLNYKLGLGVPLDCQVLTKEDILEVVRYLIDLKNGRGTIDDIDHLGNRRVRAVGELLENQYRIGLVRMERAIKERMSLQEVENLMPHDLINSKPVSAVVKEFFGSSQLSQFMDQTNPLSEVTHKRRLSALGPGGLTRERAGFEVRDVHPTHYGRVCPIETPEGPNIGLIASLSTYARINEHGFVETPYRIVSEGKVTAEVKFFSALEEEGHAIAQANAEMDADGRFVNDYVSARKSGEFLLVHRDELELMDVAPMQLVSVAASLIPFLENDDANRALMGSNMQRQAVPLLKADSPLVGTGMERVVAKDSGVSVVARHTGVVESVDASRIVVKIDEDEYDETGTGVDIYNLIKFARSNQNTCINQRPVVKVGDHVKRGDVIADGPSTDMGELALGQNVVVAFMPWGGYNFEDSILISEKLTKDDRYTSIHIEEFECVARDTKLGKEEITSDIPNLGEETLKDLDESGIIRIGAEVKPGDIMVGKITPKGETQLSPEEKLLRAIFGEKAGDVRDTSLRVPPGVEGTVIGAKVFSRKGNDKDSRTEMIERMEEEKLRKDEQDEIRIIRDSAVGKLKRLLVGKTAAVKVEDKNGKTVIAKDAAITEEALTAIPLDRWDEISVSGGEGVEEKVAAILATLQQQIDIIKYVFDDKVQKLKRGDDLPPGVIKMVKVYIAIKRKLQVGDKMAGRHGNKGVVSRILPEEDMPYMEDGRPVEIVLNPLGVPSRMNVGQILETHLGWAAKGIGWKIEEMLEKHSPSATIKEYLQKVYGSKEMNAFLDSLNEEELINVAKRLQRGVPMASPVFEGASEEQIRSMLDKAGFDETAQVRLFDGKTGEPFKHKVTVGVMYVLKLHHLVDDKIHARSIGPYSLVTQQPLGGKAQFGGQRLGEMEVWAMEAYGAAYALQEFLTVKSDDVAGRTRMYEAIVKGKHTLEPGLPESFNVLIKELQSLCLDVELLEGDED</sequence>
<organism>
    <name type="scientific">Geobacter metallireducens (strain ATCC 53774 / DSM 7210 / GS-15)</name>
    <dbReference type="NCBI Taxonomy" id="269799"/>
    <lineage>
        <taxon>Bacteria</taxon>
        <taxon>Pseudomonadati</taxon>
        <taxon>Thermodesulfobacteriota</taxon>
        <taxon>Desulfuromonadia</taxon>
        <taxon>Geobacterales</taxon>
        <taxon>Geobacteraceae</taxon>
        <taxon>Geobacter</taxon>
    </lineage>
</organism>
<gene>
    <name evidence="1" type="primary">rpoB</name>
    <name type="ordered locus">Gmet_0619</name>
</gene>
<feature type="chain" id="PRO_0000237301" description="DNA-directed RNA polymerase subunit beta">
    <location>
        <begin position="1"/>
        <end position="1370"/>
    </location>
</feature>
<evidence type="ECO:0000255" key="1">
    <source>
        <dbReference type="HAMAP-Rule" id="MF_01321"/>
    </source>
</evidence>
<protein>
    <recommendedName>
        <fullName evidence="1">DNA-directed RNA polymerase subunit beta</fullName>
        <shortName evidence="1">RNAP subunit beta</shortName>
        <ecNumber evidence="1">2.7.7.6</ecNumber>
    </recommendedName>
    <alternativeName>
        <fullName evidence="1">RNA polymerase subunit beta</fullName>
    </alternativeName>
    <alternativeName>
        <fullName evidence="1">Transcriptase subunit beta</fullName>
    </alternativeName>
</protein>
<keyword id="KW-0240">DNA-directed RNA polymerase</keyword>
<keyword id="KW-0548">Nucleotidyltransferase</keyword>
<keyword id="KW-1185">Reference proteome</keyword>
<keyword id="KW-0804">Transcription</keyword>
<keyword id="KW-0808">Transferase</keyword>
<accession>Q39Y13</accession>
<name>RPOB_GEOMG</name>
<reference key="1">
    <citation type="journal article" date="2009" name="BMC Microbiol.">
        <title>The genome sequence of Geobacter metallireducens: features of metabolism, physiology and regulation common and dissimilar to Geobacter sulfurreducens.</title>
        <authorList>
            <person name="Aklujkar M."/>
            <person name="Krushkal J."/>
            <person name="DiBartolo G."/>
            <person name="Lapidus A."/>
            <person name="Land M.L."/>
            <person name="Lovley D.R."/>
        </authorList>
    </citation>
    <scope>NUCLEOTIDE SEQUENCE [LARGE SCALE GENOMIC DNA]</scope>
    <source>
        <strain>ATCC 53774 / DSM 7210 / GS-15</strain>
    </source>
</reference>
<dbReference type="EC" id="2.7.7.6" evidence="1"/>
<dbReference type="EMBL" id="CP000148">
    <property type="protein sequence ID" value="ABB30861.1"/>
    <property type="molecule type" value="Genomic_DNA"/>
</dbReference>
<dbReference type="RefSeq" id="WP_004514635.1">
    <property type="nucleotide sequence ID" value="NC_007517.1"/>
</dbReference>
<dbReference type="SMR" id="Q39Y13"/>
<dbReference type="STRING" id="269799.Gmet_0619"/>
<dbReference type="KEGG" id="gme:Gmet_0619"/>
<dbReference type="eggNOG" id="COG0085">
    <property type="taxonomic scope" value="Bacteria"/>
</dbReference>
<dbReference type="HOGENOM" id="CLU_000524_4_0_7"/>
<dbReference type="Proteomes" id="UP000007073">
    <property type="component" value="Chromosome"/>
</dbReference>
<dbReference type="GO" id="GO:0000428">
    <property type="term" value="C:DNA-directed RNA polymerase complex"/>
    <property type="evidence" value="ECO:0007669"/>
    <property type="project" value="UniProtKB-KW"/>
</dbReference>
<dbReference type="GO" id="GO:0003677">
    <property type="term" value="F:DNA binding"/>
    <property type="evidence" value="ECO:0007669"/>
    <property type="project" value="UniProtKB-UniRule"/>
</dbReference>
<dbReference type="GO" id="GO:0003899">
    <property type="term" value="F:DNA-directed RNA polymerase activity"/>
    <property type="evidence" value="ECO:0007669"/>
    <property type="project" value="UniProtKB-UniRule"/>
</dbReference>
<dbReference type="GO" id="GO:0032549">
    <property type="term" value="F:ribonucleoside binding"/>
    <property type="evidence" value="ECO:0007669"/>
    <property type="project" value="InterPro"/>
</dbReference>
<dbReference type="GO" id="GO:0006351">
    <property type="term" value="P:DNA-templated transcription"/>
    <property type="evidence" value="ECO:0007669"/>
    <property type="project" value="UniProtKB-UniRule"/>
</dbReference>
<dbReference type="CDD" id="cd00653">
    <property type="entry name" value="RNA_pol_B_RPB2"/>
    <property type="match status" value="1"/>
</dbReference>
<dbReference type="FunFam" id="2.40.50.100:FF:000006">
    <property type="entry name" value="DNA-directed RNA polymerase subunit beta"/>
    <property type="match status" value="1"/>
</dbReference>
<dbReference type="FunFam" id="3.90.1800.10:FF:000001">
    <property type="entry name" value="DNA-directed RNA polymerase subunit beta"/>
    <property type="match status" value="1"/>
</dbReference>
<dbReference type="Gene3D" id="2.40.50.100">
    <property type="match status" value="1"/>
</dbReference>
<dbReference type="Gene3D" id="2.40.50.150">
    <property type="match status" value="1"/>
</dbReference>
<dbReference type="Gene3D" id="3.90.1100.10">
    <property type="match status" value="2"/>
</dbReference>
<dbReference type="Gene3D" id="2.30.150.10">
    <property type="entry name" value="DNA-directed RNA polymerase, beta subunit, external 1 domain"/>
    <property type="match status" value="1"/>
</dbReference>
<dbReference type="Gene3D" id="2.40.270.10">
    <property type="entry name" value="DNA-directed RNA polymerase, subunit 2, domain 6"/>
    <property type="match status" value="1"/>
</dbReference>
<dbReference type="Gene3D" id="3.90.1800.10">
    <property type="entry name" value="RNA polymerase alpha subunit dimerisation domain"/>
    <property type="match status" value="1"/>
</dbReference>
<dbReference type="Gene3D" id="3.90.1110.10">
    <property type="entry name" value="RNA polymerase Rpb2, domain 2"/>
    <property type="match status" value="1"/>
</dbReference>
<dbReference type="HAMAP" id="MF_01321">
    <property type="entry name" value="RNApol_bact_RpoB"/>
    <property type="match status" value="1"/>
</dbReference>
<dbReference type="InterPro" id="IPR042107">
    <property type="entry name" value="DNA-dir_RNA_pol_bsu_ext_1_sf"/>
</dbReference>
<dbReference type="InterPro" id="IPR019462">
    <property type="entry name" value="DNA-dir_RNA_pol_bsu_external_1"/>
</dbReference>
<dbReference type="InterPro" id="IPR015712">
    <property type="entry name" value="DNA-dir_RNA_pol_su2"/>
</dbReference>
<dbReference type="InterPro" id="IPR007120">
    <property type="entry name" value="DNA-dir_RNAP_su2_dom"/>
</dbReference>
<dbReference type="InterPro" id="IPR037033">
    <property type="entry name" value="DNA-dir_RNAP_su2_hyb_sf"/>
</dbReference>
<dbReference type="InterPro" id="IPR010243">
    <property type="entry name" value="RNA_pol_bsu_bac"/>
</dbReference>
<dbReference type="InterPro" id="IPR007121">
    <property type="entry name" value="RNA_pol_bsu_CS"/>
</dbReference>
<dbReference type="InterPro" id="IPR007644">
    <property type="entry name" value="RNA_pol_bsu_protrusion"/>
</dbReference>
<dbReference type="InterPro" id="IPR007642">
    <property type="entry name" value="RNA_pol_Rpb2_2"/>
</dbReference>
<dbReference type="InterPro" id="IPR037034">
    <property type="entry name" value="RNA_pol_Rpb2_2_sf"/>
</dbReference>
<dbReference type="InterPro" id="IPR007645">
    <property type="entry name" value="RNA_pol_Rpb2_3"/>
</dbReference>
<dbReference type="InterPro" id="IPR007641">
    <property type="entry name" value="RNA_pol_Rpb2_7"/>
</dbReference>
<dbReference type="InterPro" id="IPR014724">
    <property type="entry name" value="RNA_pol_RPB2_OB-fold"/>
</dbReference>
<dbReference type="NCBIfam" id="NF001616">
    <property type="entry name" value="PRK00405.1"/>
    <property type="match status" value="1"/>
</dbReference>
<dbReference type="NCBIfam" id="TIGR02013">
    <property type="entry name" value="rpoB"/>
    <property type="match status" value="1"/>
</dbReference>
<dbReference type="PANTHER" id="PTHR20856">
    <property type="entry name" value="DNA-DIRECTED RNA POLYMERASE I SUBUNIT 2"/>
    <property type="match status" value="1"/>
</dbReference>
<dbReference type="Pfam" id="PF04563">
    <property type="entry name" value="RNA_pol_Rpb2_1"/>
    <property type="match status" value="1"/>
</dbReference>
<dbReference type="Pfam" id="PF04561">
    <property type="entry name" value="RNA_pol_Rpb2_2"/>
    <property type="match status" value="2"/>
</dbReference>
<dbReference type="Pfam" id="PF04565">
    <property type="entry name" value="RNA_pol_Rpb2_3"/>
    <property type="match status" value="1"/>
</dbReference>
<dbReference type="Pfam" id="PF10385">
    <property type="entry name" value="RNA_pol_Rpb2_45"/>
    <property type="match status" value="1"/>
</dbReference>
<dbReference type="Pfam" id="PF00562">
    <property type="entry name" value="RNA_pol_Rpb2_6"/>
    <property type="match status" value="1"/>
</dbReference>
<dbReference type="Pfam" id="PF04560">
    <property type="entry name" value="RNA_pol_Rpb2_7"/>
    <property type="match status" value="1"/>
</dbReference>
<dbReference type="SUPFAM" id="SSF64484">
    <property type="entry name" value="beta and beta-prime subunits of DNA dependent RNA-polymerase"/>
    <property type="match status" value="1"/>
</dbReference>
<dbReference type="PROSITE" id="PS01166">
    <property type="entry name" value="RNA_POL_BETA"/>
    <property type="match status" value="1"/>
</dbReference>
<proteinExistence type="inferred from homology"/>
<comment type="function">
    <text evidence="1">DNA-dependent RNA polymerase catalyzes the transcription of DNA into RNA using the four ribonucleoside triphosphates as substrates.</text>
</comment>
<comment type="catalytic activity">
    <reaction evidence="1">
        <text>RNA(n) + a ribonucleoside 5'-triphosphate = RNA(n+1) + diphosphate</text>
        <dbReference type="Rhea" id="RHEA:21248"/>
        <dbReference type="Rhea" id="RHEA-COMP:14527"/>
        <dbReference type="Rhea" id="RHEA-COMP:17342"/>
        <dbReference type="ChEBI" id="CHEBI:33019"/>
        <dbReference type="ChEBI" id="CHEBI:61557"/>
        <dbReference type="ChEBI" id="CHEBI:140395"/>
        <dbReference type="EC" id="2.7.7.6"/>
    </reaction>
</comment>
<comment type="subunit">
    <text evidence="1">The RNAP catalytic core consists of 2 alpha, 1 beta, 1 beta' and 1 omega subunit. When a sigma factor is associated with the core the holoenzyme is formed, which can initiate transcription.</text>
</comment>
<comment type="similarity">
    <text evidence="1">Belongs to the RNA polymerase beta chain family.</text>
</comment>